<name>PUR7_VIBCH</name>
<sequence>MSLADQVLAVNDDLPIRTHQPVHSGKVRSVYWLTEQDSRRLIKEKGYPVAEDAPLAIMVISDRISAFDCIWHAEGGVHGVPGKGAALNAISNHWFKLFKQHGLAESHILDIPHPFVWIVQKARPIKIEAICRQYITGSMWRAYAKGEREFCGITLPEGLEKDSQLPELLMTPSTKGILRGIPGVPEADDVNISRQDIEANYAAFNFNQPQDIDHYETLLKQGFAVISEALKSVGQLFVDTKFEFGYVADQQGQQKLIYMDEVGTPDSSRIWDAQQYQQGKIVENSKEGFRQFLLNYFPDPDILLNKDRMPEREALARDNALPLEALMDISRTYLGIAEKITGQPIHLSHQPKQEIIAILDKEYGLIER</sequence>
<keyword id="KW-0067">ATP-binding</keyword>
<keyword id="KW-0436">Ligase</keyword>
<keyword id="KW-0547">Nucleotide-binding</keyword>
<keyword id="KW-0658">Purine biosynthesis</keyword>
<keyword id="KW-1185">Reference proteome</keyword>
<reference key="1">
    <citation type="journal article" date="2000" name="Nature">
        <title>DNA sequence of both chromosomes of the cholera pathogen Vibrio cholerae.</title>
        <authorList>
            <person name="Heidelberg J.F."/>
            <person name="Eisen J.A."/>
            <person name="Nelson W.C."/>
            <person name="Clayton R.A."/>
            <person name="Gwinn M.L."/>
            <person name="Dodson R.J."/>
            <person name="Haft D.H."/>
            <person name="Hickey E.K."/>
            <person name="Peterson J.D."/>
            <person name="Umayam L.A."/>
            <person name="Gill S.R."/>
            <person name="Nelson K.E."/>
            <person name="Read T.D."/>
            <person name="Tettelin H."/>
            <person name="Richardson D.L."/>
            <person name="Ermolaeva M.D."/>
            <person name="Vamathevan J.J."/>
            <person name="Bass S."/>
            <person name="Qin H."/>
            <person name="Dragoi I."/>
            <person name="Sellers P."/>
            <person name="McDonald L.A."/>
            <person name="Utterback T.R."/>
            <person name="Fleischmann R.D."/>
            <person name="Nierman W.C."/>
            <person name="White O."/>
            <person name="Salzberg S.L."/>
            <person name="Smith H.O."/>
            <person name="Colwell R.R."/>
            <person name="Mekalanos J.J."/>
            <person name="Venter J.C."/>
            <person name="Fraser C.M."/>
        </authorList>
    </citation>
    <scope>NUCLEOTIDE SEQUENCE [LARGE SCALE GENOMIC DNA]</scope>
    <source>
        <strain>ATCC 39315 / El Tor Inaba N16961</strain>
    </source>
</reference>
<proteinExistence type="inferred from homology"/>
<accession>Q9KSR6</accession>
<gene>
    <name evidence="1" type="primary">purC</name>
    <name type="ordered locus">VC_1190</name>
</gene>
<protein>
    <recommendedName>
        <fullName evidence="1">Phosphoribosylaminoimidazole-succinocarboxamide synthase</fullName>
        <ecNumber evidence="1">6.3.2.6</ecNumber>
    </recommendedName>
    <alternativeName>
        <fullName evidence="1">SAICAR synthetase</fullName>
    </alternativeName>
</protein>
<feature type="chain" id="PRO_0000100895" description="Phosphoribosylaminoimidazole-succinocarboxamide synthase">
    <location>
        <begin position="1"/>
        <end position="368"/>
    </location>
</feature>
<dbReference type="EC" id="6.3.2.6" evidence="1"/>
<dbReference type="EMBL" id="AE003852">
    <property type="protein sequence ID" value="AAF94349.1"/>
    <property type="status" value="ALT_INIT"/>
    <property type="molecule type" value="Genomic_DNA"/>
</dbReference>
<dbReference type="PIR" id="F82229">
    <property type="entry name" value="F82229"/>
</dbReference>
<dbReference type="RefSeq" id="NP_230835.2">
    <property type="nucleotide sequence ID" value="NC_002505.1"/>
</dbReference>
<dbReference type="RefSeq" id="WP_000050052.1">
    <property type="nucleotide sequence ID" value="NZ_LT906614.1"/>
</dbReference>
<dbReference type="SMR" id="Q9KSR6"/>
<dbReference type="STRING" id="243277.VC_1190"/>
<dbReference type="DNASU" id="2614623"/>
<dbReference type="EnsemblBacteria" id="AAF94349">
    <property type="protein sequence ID" value="AAF94349"/>
    <property type="gene ID" value="VC_1190"/>
</dbReference>
<dbReference type="KEGG" id="vch:VC_1190"/>
<dbReference type="PATRIC" id="fig|243277.26.peg.1138"/>
<dbReference type="eggNOG" id="COG0152">
    <property type="taxonomic scope" value="Bacteria"/>
</dbReference>
<dbReference type="HOGENOM" id="CLU_064197_0_0_6"/>
<dbReference type="UniPathway" id="UPA00074">
    <property type="reaction ID" value="UER00131"/>
</dbReference>
<dbReference type="Proteomes" id="UP000000584">
    <property type="component" value="Chromosome 1"/>
</dbReference>
<dbReference type="GO" id="GO:0005524">
    <property type="term" value="F:ATP binding"/>
    <property type="evidence" value="ECO:0007669"/>
    <property type="project" value="UniProtKB-KW"/>
</dbReference>
<dbReference type="GO" id="GO:0004639">
    <property type="term" value="F:phosphoribosylaminoimidazolesuccinocarboxamide synthase activity"/>
    <property type="evidence" value="ECO:0000318"/>
    <property type="project" value="GO_Central"/>
</dbReference>
<dbReference type="GO" id="GO:0006189">
    <property type="term" value="P:'de novo' IMP biosynthetic process"/>
    <property type="evidence" value="ECO:0000318"/>
    <property type="project" value="GO_Central"/>
</dbReference>
<dbReference type="CDD" id="cd01414">
    <property type="entry name" value="SAICAR_synt_Sc"/>
    <property type="match status" value="1"/>
</dbReference>
<dbReference type="FunFam" id="3.30.200.20:FF:000597">
    <property type="entry name" value="Phosphoribosylaminoimidazole-succinocarboxamide synthase"/>
    <property type="match status" value="1"/>
</dbReference>
<dbReference type="Gene3D" id="3.30.470.20">
    <property type="entry name" value="ATP-grasp fold, B domain"/>
    <property type="match status" value="1"/>
</dbReference>
<dbReference type="Gene3D" id="3.30.200.20">
    <property type="entry name" value="Phosphorylase Kinase, domain 1"/>
    <property type="match status" value="1"/>
</dbReference>
<dbReference type="HAMAP" id="MF_00137">
    <property type="entry name" value="SAICAR_synth"/>
    <property type="match status" value="1"/>
</dbReference>
<dbReference type="InterPro" id="IPR028923">
    <property type="entry name" value="SAICAR_synt/ADE2_N"/>
</dbReference>
<dbReference type="InterPro" id="IPR014106">
    <property type="entry name" value="SAICAR_synthase_Vibrio-typ"/>
</dbReference>
<dbReference type="InterPro" id="IPR018236">
    <property type="entry name" value="SAICAR_synthetase_CS"/>
</dbReference>
<dbReference type="NCBIfam" id="NF010567">
    <property type="entry name" value="PRK13960.1"/>
    <property type="match status" value="1"/>
</dbReference>
<dbReference type="NCBIfam" id="TIGR02735">
    <property type="entry name" value="purC_vibrio"/>
    <property type="match status" value="1"/>
</dbReference>
<dbReference type="PANTHER" id="PTHR43700">
    <property type="entry name" value="PHOSPHORIBOSYLAMINOIMIDAZOLE-SUCCINOCARBOXAMIDE SYNTHASE"/>
    <property type="match status" value="1"/>
</dbReference>
<dbReference type="PANTHER" id="PTHR43700:SF1">
    <property type="entry name" value="PHOSPHORIBOSYLAMINOIMIDAZOLE-SUCCINOCARBOXAMIDE SYNTHASE"/>
    <property type="match status" value="1"/>
</dbReference>
<dbReference type="Pfam" id="PF01259">
    <property type="entry name" value="SAICAR_synt"/>
    <property type="match status" value="1"/>
</dbReference>
<dbReference type="SUPFAM" id="SSF56104">
    <property type="entry name" value="SAICAR synthase-like"/>
    <property type="match status" value="1"/>
</dbReference>
<dbReference type="PROSITE" id="PS01057">
    <property type="entry name" value="SAICAR_SYNTHETASE_1"/>
    <property type="match status" value="1"/>
</dbReference>
<comment type="catalytic activity">
    <reaction evidence="1">
        <text>5-amino-1-(5-phospho-D-ribosyl)imidazole-4-carboxylate + L-aspartate + ATP = (2S)-2-[5-amino-1-(5-phospho-beta-D-ribosyl)imidazole-4-carboxamido]succinate + ADP + phosphate + 2 H(+)</text>
        <dbReference type="Rhea" id="RHEA:22628"/>
        <dbReference type="ChEBI" id="CHEBI:15378"/>
        <dbReference type="ChEBI" id="CHEBI:29991"/>
        <dbReference type="ChEBI" id="CHEBI:30616"/>
        <dbReference type="ChEBI" id="CHEBI:43474"/>
        <dbReference type="ChEBI" id="CHEBI:58443"/>
        <dbReference type="ChEBI" id="CHEBI:77657"/>
        <dbReference type="ChEBI" id="CHEBI:456216"/>
        <dbReference type="EC" id="6.3.2.6"/>
    </reaction>
</comment>
<comment type="pathway">
    <text evidence="1">Purine metabolism; IMP biosynthesis via de novo pathway; 5-amino-1-(5-phospho-D-ribosyl)imidazole-4-carboxamide from 5-amino-1-(5-phospho-D-ribosyl)imidazole-4-carboxylate: step 1/2.</text>
</comment>
<comment type="similarity">
    <text evidence="1">Belongs to the SAICAR synthetase family.</text>
</comment>
<comment type="sequence caution" evidence="2">
    <conflict type="erroneous initiation">
        <sequence resource="EMBL-CDS" id="AAF94349"/>
    </conflict>
</comment>
<organism>
    <name type="scientific">Vibrio cholerae serotype O1 (strain ATCC 39315 / El Tor Inaba N16961)</name>
    <dbReference type="NCBI Taxonomy" id="243277"/>
    <lineage>
        <taxon>Bacteria</taxon>
        <taxon>Pseudomonadati</taxon>
        <taxon>Pseudomonadota</taxon>
        <taxon>Gammaproteobacteria</taxon>
        <taxon>Vibrionales</taxon>
        <taxon>Vibrionaceae</taxon>
        <taxon>Vibrio</taxon>
    </lineage>
</organism>
<evidence type="ECO:0000255" key="1">
    <source>
        <dbReference type="HAMAP-Rule" id="MF_00137"/>
    </source>
</evidence>
<evidence type="ECO:0000305" key="2"/>